<organism>
    <name type="scientific">Paracoccus denitrificans (strain Pd 1222)</name>
    <dbReference type="NCBI Taxonomy" id="318586"/>
    <lineage>
        <taxon>Bacteria</taxon>
        <taxon>Pseudomonadati</taxon>
        <taxon>Pseudomonadota</taxon>
        <taxon>Alphaproteobacteria</taxon>
        <taxon>Rhodobacterales</taxon>
        <taxon>Paracoccaceae</taxon>
        <taxon>Paracoccus</taxon>
    </lineage>
</organism>
<accession>A1AZX8</accession>
<comment type="function">
    <text evidence="1">Catalyzes the hydrolytic cleavage of the carbon-nitrogen bond in imidazolone-5-propanoate to yield N-formimidoyl-L-glutamate. It is the third step in the universal histidine degradation pathway.</text>
</comment>
<comment type="catalytic activity">
    <reaction evidence="1">
        <text>4-imidazolone-5-propanoate + H2O = N-formimidoyl-L-glutamate</text>
        <dbReference type="Rhea" id="RHEA:23660"/>
        <dbReference type="ChEBI" id="CHEBI:15377"/>
        <dbReference type="ChEBI" id="CHEBI:58928"/>
        <dbReference type="ChEBI" id="CHEBI:77893"/>
        <dbReference type="EC" id="3.5.2.7"/>
    </reaction>
</comment>
<comment type="cofactor">
    <cofactor evidence="1">
        <name>Zn(2+)</name>
        <dbReference type="ChEBI" id="CHEBI:29105"/>
    </cofactor>
    <cofactor evidence="1">
        <name>Fe(3+)</name>
        <dbReference type="ChEBI" id="CHEBI:29034"/>
    </cofactor>
    <text evidence="1">Binds 1 zinc or iron ion per subunit.</text>
</comment>
<comment type="pathway">
    <text evidence="1">Amino-acid degradation; L-histidine degradation into L-glutamate; N-formimidoyl-L-glutamate from L-histidine: step 3/3.</text>
</comment>
<comment type="subcellular location">
    <subcellularLocation>
        <location evidence="1">Cytoplasm</location>
    </subcellularLocation>
</comment>
<comment type="similarity">
    <text evidence="1">Belongs to the metallo-dependent hydrolases superfamily. HutI family.</text>
</comment>
<evidence type="ECO:0000255" key="1">
    <source>
        <dbReference type="HAMAP-Rule" id="MF_00372"/>
    </source>
</evidence>
<reference key="1">
    <citation type="submission" date="2006-12" db="EMBL/GenBank/DDBJ databases">
        <title>Complete sequence of chromosome 1 of Paracoccus denitrificans PD1222.</title>
        <authorList>
            <person name="Copeland A."/>
            <person name="Lucas S."/>
            <person name="Lapidus A."/>
            <person name="Barry K."/>
            <person name="Detter J.C."/>
            <person name="Glavina del Rio T."/>
            <person name="Hammon N."/>
            <person name="Israni S."/>
            <person name="Dalin E."/>
            <person name="Tice H."/>
            <person name="Pitluck S."/>
            <person name="Munk A.C."/>
            <person name="Brettin T."/>
            <person name="Bruce D."/>
            <person name="Han C."/>
            <person name="Tapia R."/>
            <person name="Gilna P."/>
            <person name="Schmutz J."/>
            <person name="Larimer F."/>
            <person name="Land M."/>
            <person name="Hauser L."/>
            <person name="Kyrpides N."/>
            <person name="Lykidis A."/>
            <person name="Spiro S."/>
            <person name="Richardson D.J."/>
            <person name="Moir J.W.B."/>
            <person name="Ferguson S.J."/>
            <person name="van Spanning R.J.M."/>
            <person name="Richardson P."/>
        </authorList>
    </citation>
    <scope>NUCLEOTIDE SEQUENCE [LARGE SCALE GENOMIC DNA]</scope>
    <source>
        <strain>Pd 1222</strain>
    </source>
</reference>
<name>HUTI_PARDP</name>
<dbReference type="EC" id="3.5.2.7" evidence="1"/>
<dbReference type="EMBL" id="CP000489">
    <property type="protein sequence ID" value="ABL68822.1"/>
    <property type="molecule type" value="Genomic_DNA"/>
</dbReference>
<dbReference type="RefSeq" id="WP_011747055.1">
    <property type="nucleotide sequence ID" value="NC_008686.1"/>
</dbReference>
<dbReference type="SMR" id="A1AZX8"/>
<dbReference type="STRING" id="318586.Pden_0710"/>
<dbReference type="EnsemblBacteria" id="ABL68822">
    <property type="protein sequence ID" value="ABL68822"/>
    <property type="gene ID" value="Pden_0710"/>
</dbReference>
<dbReference type="GeneID" id="93451934"/>
<dbReference type="KEGG" id="pde:Pden_0710"/>
<dbReference type="eggNOG" id="COG1228">
    <property type="taxonomic scope" value="Bacteria"/>
</dbReference>
<dbReference type="HOGENOM" id="CLU_041647_0_0_5"/>
<dbReference type="OrthoDB" id="9776455at2"/>
<dbReference type="UniPathway" id="UPA00379">
    <property type="reaction ID" value="UER00551"/>
</dbReference>
<dbReference type="Proteomes" id="UP000000361">
    <property type="component" value="Chromosome 1"/>
</dbReference>
<dbReference type="GO" id="GO:0005737">
    <property type="term" value="C:cytoplasm"/>
    <property type="evidence" value="ECO:0007669"/>
    <property type="project" value="UniProtKB-SubCell"/>
</dbReference>
<dbReference type="GO" id="GO:0050480">
    <property type="term" value="F:imidazolonepropionase activity"/>
    <property type="evidence" value="ECO:0007669"/>
    <property type="project" value="UniProtKB-UniRule"/>
</dbReference>
<dbReference type="GO" id="GO:0005506">
    <property type="term" value="F:iron ion binding"/>
    <property type="evidence" value="ECO:0007669"/>
    <property type="project" value="UniProtKB-UniRule"/>
</dbReference>
<dbReference type="GO" id="GO:0008270">
    <property type="term" value="F:zinc ion binding"/>
    <property type="evidence" value="ECO:0007669"/>
    <property type="project" value="UniProtKB-UniRule"/>
</dbReference>
<dbReference type="GO" id="GO:0019556">
    <property type="term" value="P:L-histidine catabolic process to glutamate and formamide"/>
    <property type="evidence" value="ECO:0007669"/>
    <property type="project" value="UniProtKB-UniPathway"/>
</dbReference>
<dbReference type="GO" id="GO:0019557">
    <property type="term" value="P:L-histidine catabolic process to glutamate and formate"/>
    <property type="evidence" value="ECO:0007669"/>
    <property type="project" value="UniProtKB-UniPathway"/>
</dbReference>
<dbReference type="CDD" id="cd01296">
    <property type="entry name" value="Imidazolone-5PH"/>
    <property type="match status" value="1"/>
</dbReference>
<dbReference type="FunFam" id="3.20.20.140:FF:000007">
    <property type="entry name" value="Imidazolonepropionase"/>
    <property type="match status" value="1"/>
</dbReference>
<dbReference type="Gene3D" id="3.20.20.140">
    <property type="entry name" value="Metal-dependent hydrolases"/>
    <property type="match status" value="1"/>
</dbReference>
<dbReference type="Gene3D" id="2.30.40.10">
    <property type="entry name" value="Urease, subunit C, domain 1"/>
    <property type="match status" value="1"/>
</dbReference>
<dbReference type="HAMAP" id="MF_00372">
    <property type="entry name" value="HutI"/>
    <property type="match status" value="1"/>
</dbReference>
<dbReference type="InterPro" id="IPR006680">
    <property type="entry name" value="Amidohydro-rel"/>
</dbReference>
<dbReference type="InterPro" id="IPR005920">
    <property type="entry name" value="HutI"/>
</dbReference>
<dbReference type="InterPro" id="IPR011059">
    <property type="entry name" value="Metal-dep_hydrolase_composite"/>
</dbReference>
<dbReference type="InterPro" id="IPR032466">
    <property type="entry name" value="Metal_Hydrolase"/>
</dbReference>
<dbReference type="InterPro" id="IPR054418">
    <property type="entry name" value="MQNX/HUTI_composite_N"/>
</dbReference>
<dbReference type="NCBIfam" id="TIGR01224">
    <property type="entry name" value="hutI"/>
    <property type="match status" value="1"/>
</dbReference>
<dbReference type="PANTHER" id="PTHR42752">
    <property type="entry name" value="IMIDAZOLONEPROPIONASE"/>
    <property type="match status" value="1"/>
</dbReference>
<dbReference type="PANTHER" id="PTHR42752:SF1">
    <property type="entry name" value="IMIDAZOLONEPROPIONASE-RELATED"/>
    <property type="match status" value="1"/>
</dbReference>
<dbReference type="Pfam" id="PF01979">
    <property type="entry name" value="Amidohydro_1"/>
    <property type="match status" value="1"/>
</dbReference>
<dbReference type="Pfam" id="PF22039">
    <property type="entry name" value="HUTI_composite_bact"/>
    <property type="match status" value="1"/>
</dbReference>
<dbReference type="SUPFAM" id="SSF51338">
    <property type="entry name" value="Composite domain of metallo-dependent hydrolases"/>
    <property type="match status" value="1"/>
</dbReference>
<dbReference type="SUPFAM" id="SSF51556">
    <property type="entry name" value="Metallo-dependent hydrolases"/>
    <property type="match status" value="1"/>
</dbReference>
<feature type="chain" id="PRO_0000306478" description="Imidazolonepropionase">
    <location>
        <begin position="1"/>
        <end position="400"/>
    </location>
</feature>
<feature type="binding site" evidence="1">
    <location>
        <position position="68"/>
    </location>
    <ligand>
        <name>Fe(3+)</name>
        <dbReference type="ChEBI" id="CHEBI:29034"/>
    </ligand>
</feature>
<feature type="binding site" evidence="1">
    <location>
        <position position="68"/>
    </location>
    <ligand>
        <name>Zn(2+)</name>
        <dbReference type="ChEBI" id="CHEBI:29105"/>
    </ligand>
</feature>
<feature type="binding site" evidence="1">
    <location>
        <position position="70"/>
    </location>
    <ligand>
        <name>Fe(3+)</name>
        <dbReference type="ChEBI" id="CHEBI:29034"/>
    </ligand>
</feature>
<feature type="binding site" evidence="1">
    <location>
        <position position="70"/>
    </location>
    <ligand>
        <name>Zn(2+)</name>
        <dbReference type="ChEBI" id="CHEBI:29105"/>
    </ligand>
</feature>
<feature type="binding site" evidence="1">
    <location>
        <position position="77"/>
    </location>
    <ligand>
        <name>4-imidazolone-5-propanoate</name>
        <dbReference type="ChEBI" id="CHEBI:77893"/>
    </ligand>
</feature>
<feature type="binding site" evidence="1">
    <location>
        <position position="140"/>
    </location>
    <ligand>
        <name>4-imidazolone-5-propanoate</name>
        <dbReference type="ChEBI" id="CHEBI:77893"/>
    </ligand>
</feature>
<feature type="binding site" evidence="1">
    <location>
        <position position="140"/>
    </location>
    <ligand>
        <name>N-formimidoyl-L-glutamate</name>
        <dbReference type="ChEBI" id="CHEBI:58928"/>
    </ligand>
</feature>
<feature type="binding site" evidence="1">
    <location>
        <position position="173"/>
    </location>
    <ligand>
        <name>4-imidazolone-5-propanoate</name>
        <dbReference type="ChEBI" id="CHEBI:77893"/>
    </ligand>
</feature>
<feature type="binding site" evidence="1">
    <location>
        <position position="238"/>
    </location>
    <ligand>
        <name>Fe(3+)</name>
        <dbReference type="ChEBI" id="CHEBI:29034"/>
    </ligand>
</feature>
<feature type="binding site" evidence="1">
    <location>
        <position position="238"/>
    </location>
    <ligand>
        <name>Zn(2+)</name>
        <dbReference type="ChEBI" id="CHEBI:29105"/>
    </ligand>
</feature>
<feature type="binding site" evidence="1">
    <location>
        <position position="241"/>
    </location>
    <ligand>
        <name>4-imidazolone-5-propanoate</name>
        <dbReference type="ChEBI" id="CHEBI:77893"/>
    </ligand>
</feature>
<feature type="binding site" evidence="1">
    <location>
        <position position="313"/>
    </location>
    <ligand>
        <name>Fe(3+)</name>
        <dbReference type="ChEBI" id="CHEBI:29034"/>
    </ligand>
</feature>
<feature type="binding site" evidence="1">
    <location>
        <position position="313"/>
    </location>
    <ligand>
        <name>Zn(2+)</name>
        <dbReference type="ChEBI" id="CHEBI:29105"/>
    </ligand>
</feature>
<feature type="binding site" evidence="1">
    <location>
        <position position="315"/>
    </location>
    <ligand>
        <name>N-formimidoyl-L-glutamate</name>
        <dbReference type="ChEBI" id="CHEBI:58928"/>
    </ligand>
</feature>
<feature type="binding site" evidence="1">
    <location>
        <position position="317"/>
    </location>
    <ligand>
        <name>N-formimidoyl-L-glutamate</name>
        <dbReference type="ChEBI" id="CHEBI:58928"/>
    </ligand>
</feature>
<feature type="binding site" evidence="1">
    <location>
        <position position="318"/>
    </location>
    <ligand>
        <name>4-imidazolone-5-propanoate</name>
        <dbReference type="ChEBI" id="CHEBI:77893"/>
    </ligand>
</feature>
<gene>
    <name evidence="1" type="primary">hutI</name>
    <name type="ordered locus">Pden_0710</name>
</gene>
<proteinExistence type="inferred from homology"/>
<keyword id="KW-0963">Cytoplasm</keyword>
<keyword id="KW-0369">Histidine metabolism</keyword>
<keyword id="KW-0378">Hydrolase</keyword>
<keyword id="KW-0408">Iron</keyword>
<keyword id="KW-0479">Metal-binding</keyword>
<keyword id="KW-1185">Reference proteome</keyword>
<keyword id="KW-0862">Zinc</keyword>
<protein>
    <recommendedName>
        <fullName evidence="1">Imidazolonepropionase</fullName>
        <ecNumber evidence="1">3.5.2.7</ecNumber>
    </recommendedName>
    <alternativeName>
        <fullName evidence="1">Imidazolone-5-propionate hydrolase</fullName>
    </alternativeName>
</protein>
<sequence length="400" mass="42902">MQLLHHAQLVTMDEESGGYGLIEQGALVIEAGRISWIGPETDLPAQYADATRRDLGGRLVTPGLIDCHTHIVFGGDRAREFEMRLEGASYEEIARAGGGILSSVRATREADEEALLAAALPRVDTLLAEGVTTLEIKSGYGLDIDSELKMLRVARRVGQLRKVTVRTTWLAAHALPPEYKDDRAGYIREVVIAGMERGHAEGLIDAVDGFCEGIAFTREEMAGIFDHAAKLGLPVKLHAEQLSDLGGAAMAARHGALSADHLEYLGQDGIEAMAASGTVAVLLPGAFYTLRETQYPPMAALRDAGVPIALATDCNPGTSPLTSLLLTMNMGATLFRMTPSECLAGVTRHAARALGLKDRGRLTPGMRADLAVWDIRHPAELTYRIGFNPLHARIVGGELV</sequence>